<dbReference type="GO" id="GO:0005576">
    <property type="term" value="C:extracellular region"/>
    <property type="evidence" value="ECO:0007669"/>
    <property type="project" value="UniProtKB-SubCell"/>
</dbReference>
<dbReference type="GO" id="GO:0030430">
    <property type="term" value="C:host cell cytoplasm"/>
    <property type="evidence" value="ECO:0007669"/>
    <property type="project" value="UniProtKB-SubCell"/>
</dbReference>
<dbReference type="GO" id="GO:0042025">
    <property type="term" value="C:host cell nucleus"/>
    <property type="evidence" value="ECO:0007669"/>
    <property type="project" value="UniProtKB-SubCell"/>
</dbReference>
<protein>
    <recommendedName>
        <fullName evidence="4">Secreted RxLR effector protein 147</fullName>
    </recommendedName>
</protein>
<proteinExistence type="evidence at transcript level"/>
<sequence length="217" mass="23879">MRGAFYVTTALLITNSIRTAAEANPPGRQPMSHHDGVVPGKSSPRRFLQGSHEPHDKFAVSAANEERMPEPSAKITASLSEEALDTVRKAAHFTFDLNAPPEETPTGMVEAYQVLRQKDPRTVTASHPKRTAEALTSLDEALGYANPKYSAGGQSKKLRTSVSFKATEVRNSISRDRMTPTPRTLSDDDVQNVHKLYMEHLERNLAVFAPTVGGRRE</sequence>
<name>RL147_PLAVT</name>
<reference key="1">
    <citation type="journal article" date="2018" name="Front. Plant Sci.">
        <title>In planta functional analysis and subcellular localization of the oomycete pathogen Plasmopara viticola candidate RXLR effector repertoire.</title>
        <authorList>
            <person name="Liu Y."/>
            <person name="Lan X."/>
            <person name="Song S."/>
            <person name="Yin L."/>
            <person name="Dry I.B."/>
            <person name="Qu J."/>
            <person name="Xiang J."/>
            <person name="Lu J."/>
        </authorList>
    </citation>
    <scope>NUCLEOTIDE SEQUENCE [MRNA]</scope>
    <scope>DOMAIN</scope>
    <scope>FUNCTION</scope>
    <scope>SUBCELLULAR LOCATION</scope>
</reference>
<gene>
    <name evidence="4" type="primary">RXLR147</name>
</gene>
<evidence type="ECO:0000255" key="1"/>
<evidence type="ECO:0000256" key="2">
    <source>
        <dbReference type="SAM" id="MobiDB-lite"/>
    </source>
</evidence>
<evidence type="ECO:0000269" key="3">
    <source>
    </source>
</evidence>
<evidence type="ECO:0000303" key="4">
    <source>
    </source>
</evidence>
<evidence type="ECO:0000305" key="5"/>
<evidence type="ECO:0000305" key="6">
    <source>
    </source>
</evidence>
<organism>
    <name type="scientific">Plasmopara viticola</name>
    <name type="common">Downy mildew of grapevine</name>
    <name type="synonym">Botrytis viticola</name>
    <dbReference type="NCBI Taxonomy" id="143451"/>
    <lineage>
        <taxon>Eukaryota</taxon>
        <taxon>Sar</taxon>
        <taxon>Stramenopiles</taxon>
        <taxon>Oomycota</taxon>
        <taxon>Peronosporales</taxon>
        <taxon>Peronosporaceae</taxon>
        <taxon>Plasmopara</taxon>
    </lineage>
</organism>
<feature type="signal peptide" evidence="1">
    <location>
        <begin position="1"/>
        <end position="23"/>
    </location>
</feature>
<feature type="chain" id="PRO_0000447972" description="Secreted RxLR effector protein 147">
    <location>
        <begin position="24"/>
        <end position="217"/>
    </location>
</feature>
<feature type="region of interest" description="Disordered" evidence="2">
    <location>
        <begin position="22"/>
        <end position="52"/>
    </location>
</feature>
<feature type="short sequence motif" description="RxLR-dEER" evidence="6">
    <location>
        <begin position="46"/>
        <end position="67"/>
    </location>
</feature>
<keyword id="KW-1035">Host cytoplasm</keyword>
<keyword id="KW-1048">Host nucleus</keyword>
<keyword id="KW-0964">Secreted</keyword>
<keyword id="KW-0732">Signal</keyword>
<keyword id="KW-0843">Virulence</keyword>
<comment type="function">
    <text evidence="3">Secreted effector that completely suppresses the host cell death induced by cell death-inducing proteins.</text>
</comment>
<comment type="subcellular location">
    <subcellularLocation>
        <location evidence="3">Secreted</location>
    </subcellularLocation>
    <subcellularLocation>
        <location evidence="3">Host nucleus</location>
    </subcellularLocation>
    <subcellularLocation>
        <location evidence="3">Host cytoplasm</location>
    </subcellularLocation>
</comment>
<comment type="domain">
    <text evidence="6">The RxLR-dEER motif acts to carry the protein into the host cell cytoplasm through binding to cell surface phosphatidylinositol-3-phosphate.</text>
</comment>
<comment type="similarity">
    <text evidence="5">Belongs to the RxLR effector family.</text>
</comment>
<accession>P0CV62</accession>